<sequence>MKPKAVLIGPPGAGKSTIGRRLAQALELELVDTDAEIERTTGRTIPEIFTHDGEPRFREIEESVVRDALQATDGIVSLGGGAILSDRTRELLQGHTVIYLEISVAEGLRRTGANNHRPLLAGGDPKVKYQELMRRRRPLYRRSATIRIRTDGRSPARVVGQLVSKLQDK</sequence>
<gene>
    <name evidence="1" type="primary">aroK</name>
    <name type="ordered locus">RER_29920</name>
</gene>
<name>AROK_RHOE4</name>
<reference key="1">
    <citation type="submission" date="2005-03" db="EMBL/GenBank/DDBJ databases">
        <title>Comparison of the complete genome sequences of Rhodococcus erythropolis PR4 and Rhodococcus opacus B4.</title>
        <authorList>
            <person name="Takarada H."/>
            <person name="Sekine M."/>
            <person name="Hosoyama A."/>
            <person name="Yamada R."/>
            <person name="Fujisawa T."/>
            <person name="Omata S."/>
            <person name="Shimizu A."/>
            <person name="Tsukatani N."/>
            <person name="Tanikawa S."/>
            <person name="Fujita N."/>
            <person name="Harayama S."/>
        </authorList>
    </citation>
    <scope>NUCLEOTIDE SEQUENCE [LARGE SCALE GENOMIC DNA]</scope>
    <source>
        <strain>PR4 / NBRC 100887</strain>
    </source>
</reference>
<accession>C0ZZB5</accession>
<protein>
    <recommendedName>
        <fullName evidence="1">Shikimate kinase</fullName>
        <shortName evidence="1">SK</shortName>
        <ecNumber evidence="1">2.7.1.71</ecNumber>
    </recommendedName>
</protein>
<comment type="function">
    <text evidence="1">Catalyzes the specific phosphorylation of the 3-hydroxyl group of shikimic acid using ATP as a cosubstrate.</text>
</comment>
<comment type="catalytic activity">
    <reaction evidence="1">
        <text>shikimate + ATP = 3-phosphoshikimate + ADP + H(+)</text>
        <dbReference type="Rhea" id="RHEA:13121"/>
        <dbReference type="ChEBI" id="CHEBI:15378"/>
        <dbReference type="ChEBI" id="CHEBI:30616"/>
        <dbReference type="ChEBI" id="CHEBI:36208"/>
        <dbReference type="ChEBI" id="CHEBI:145989"/>
        <dbReference type="ChEBI" id="CHEBI:456216"/>
        <dbReference type="EC" id="2.7.1.71"/>
    </reaction>
</comment>
<comment type="cofactor">
    <cofactor evidence="1">
        <name>Mg(2+)</name>
        <dbReference type="ChEBI" id="CHEBI:18420"/>
    </cofactor>
    <text evidence="1">Binds 1 Mg(2+) ion per subunit.</text>
</comment>
<comment type="pathway">
    <text evidence="1">Metabolic intermediate biosynthesis; chorismate biosynthesis; chorismate from D-erythrose 4-phosphate and phosphoenolpyruvate: step 5/7.</text>
</comment>
<comment type="subunit">
    <text evidence="1">Monomer.</text>
</comment>
<comment type="subcellular location">
    <subcellularLocation>
        <location evidence="1">Cytoplasm</location>
    </subcellularLocation>
</comment>
<comment type="similarity">
    <text evidence="1">Belongs to the shikimate kinase family.</text>
</comment>
<evidence type="ECO:0000255" key="1">
    <source>
        <dbReference type="HAMAP-Rule" id="MF_00109"/>
    </source>
</evidence>
<dbReference type="EC" id="2.7.1.71" evidence="1"/>
<dbReference type="EMBL" id="AP008957">
    <property type="protein sequence ID" value="BAH33700.1"/>
    <property type="molecule type" value="Genomic_DNA"/>
</dbReference>
<dbReference type="RefSeq" id="WP_020907693.1">
    <property type="nucleotide sequence ID" value="NC_012490.1"/>
</dbReference>
<dbReference type="SMR" id="C0ZZB5"/>
<dbReference type="KEGG" id="rer:RER_29920"/>
<dbReference type="eggNOG" id="COG0703">
    <property type="taxonomic scope" value="Bacteria"/>
</dbReference>
<dbReference type="HOGENOM" id="CLU_057607_3_3_11"/>
<dbReference type="UniPathway" id="UPA00053">
    <property type="reaction ID" value="UER00088"/>
</dbReference>
<dbReference type="Proteomes" id="UP000002204">
    <property type="component" value="Chromosome"/>
</dbReference>
<dbReference type="GO" id="GO:0005829">
    <property type="term" value="C:cytosol"/>
    <property type="evidence" value="ECO:0007669"/>
    <property type="project" value="TreeGrafter"/>
</dbReference>
<dbReference type="GO" id="GO:0005524">
    <property type="term" value="F:ATP binding"/>
    <property type="evidence" value="ECO:0007669"/>
    <property type="project" value="UniProtKB-UniRule"/>
</dbReference>
<dbReference type="GO" id="GO:0000287">
    <property type="term" value="F:magnesium ion binding"/>
    <property type="evidence" value="ECO:0007669"/>
    <property type="project" value="UniProtKB-UniRule"/>
</dbReference>
<dbReference type="GO" id="GO:0004765">
    <property type="term" value="F:shikimate kinase activity"/>
    <property type="evidence" value="ECO:0007669"/>
    <property type="project" value="UniProtKB-UniRule"/>
</dbReference>
<dbReference type="GO" id="GO:0008652">
    <property type="term" value="P:amino acid biosynthetic process"/>
    <property type="evidence" value="ECO:0007669"/>
    <property type="project" value="UniProtKB-KW"/>
</dbReference>
<dbReference type="GO" id="GO:0009073">
    <property type="term" value="P:aromatic amino acid family biosynthetic process"/>
    <property type="evidence" value="ECO:0007669"/>
    <property type="project" value="UniProtKB-KW"/>
</dbReference>
<dbReference type="GO" id="GO:0009423">
    <property type="term" value="P:chorismate biosynthetic process"/>
    <property type="evidence" value="ECO:0007669"/>
    <property type="project" value="UniProtKB-UniRule"/>
</dbReference>
<dbReference type="CDD" id="cd00464">
    <property type="entry name" value="SK"/>
    <property type="match status" value="1"/>
</dbReference>
<dbReference type="Gene3D" id="3.40.50.300">
    <property type="entry name" value="P-loop containing nucleotide triphosphate hydrolases"/>
    <property type="match status" value="1"/>
</dbReference>
<dbReference type="HAMAP" id="MF_00109">
    <property type="entry name" value="Shikimate_kinase"/>
    <property type="match status" value="1"/>
</dbReference>
<dbReference type="InterPro" id="IPR027417">
    <property type="entry name" value="P-loop_NTPase"/>
</dbReference>
<dbReference type="InterPro" id="IPR031322">
    <property type="entry name" value="Shikimate/glucono_kinase"/>
</dbReference>
<dbReference type="InterPro" id="IPR000623">
    <property type="entry name" value="Shikimate_kinase/TSH1"/>
</dbReference>
<dbReference type="InterPro" id="IPR023000">
    <property type="entry name" value="Shikimate_kinase_CS"/>
</dbReference>
<dbReference type="PANTHER" id="PTHR21087">
    <property type="entry name" value="SHIKIMATE KINASE"/>
    <property type="match status" value="1"/>
</dbReference>
<dbReference type="PANTHER" id="PTHR21087:SF16">
    <property type="entry name" value="SHIKIMATE KINASE 1, CHLOROPLASTIC"/>
    <property type="match status" value="1"/>
</dbReference>
<dbReference type="Pfam" id="PF01202">
    <property type="entry name" value="SKI"/>
    <property type="match status" value="1"/>
</dbReference>
<dbReference type="PRINTS" id="PR01100">
    <property type="entry name" value="SHIKIMTKNASE"/>
</dbReference>
<dbReference type="SUPFAM" id="SSF52540">
    <property type="entry name" value="P-loop containing nucleoside triphosphate hydrolases"/>
    <property type="match status" value="1"/>
</dbReference>
<dbReference type="PROSITE" id="PS01128">
    <property type="entry name" value="SHIKIMATE_KINASE"/>
    <property type="match status" value="1"/>
</dbReference>
<organism>
    <name type="scientific">Rhodococcus erythropolis (strain PR4 / NBRC 100887)</name>
    <dbReference type="NCBI Taxonomy" id="234621"/>
    <lineage>
        <taxon>Bacteria</taxon>
        <taxon>Bacillati</taxon>
        <taxon>Actinomycetota</taxon>
        <taxon>Actinomycetes</taxon>
        <taxon>Mycobacteriales</taxon>
        <taxon>Nocardiaceae</taxon>
        <taxon>Rhodococcus</taxon>
        <taxon>Rhodococcus erythropolis group</taxon>
    </lineage>
</organism>
<feature type="chain" id="PRO_1000202902" description="Shikimate kinase">
    <location>
        <begin position="1"/>
        <end position="169"/>
    </location>
</feature>
<feature type="binding site" evidence="1">
    <location>
        <begin position="12"/>
        <end position="17"/>
    </location>
    <ligand>
        <name>ATP</name>
        <dbReference type="ChEBI" id="CHEBI:30616"/>
    </ligand>
</feature>
<feature type="binding site" evidence="1">
    <location>
        <position position="16"/>
    </location>
    <ligand>
        <name>Mg(2+)</name>
        <dbReference type="ChEBI" id="CHEBI:18420"/>
    </ligand>
</feature>
<feature type="binding site" evidence="1">
    <location>
        <position position="34"/>
    </location>
    <ligand>
        <name>substrate</name>
    </ligand>
</feature>
<feature type="binding site" evidence="1">
    <location>
        <position position="58"/>
    </location>
    <ligand>
        <name>substrate</name>
    </ligand>
</feature>
<feature type="binding site" evidence="1">
    <location>
        <position position="80"/>
    </location>
    <ligand>
        <name>substrate</name>
    </ligand>
</feature>
<feature type="binding site" evidence="1">
    <location>
        <position position="117"/>
    </location>
    <ligand>
        <name>ATP</name>
        <dbReference type="ChEBI" id="CHEBI:30616"/>
    </ligand>
</feature>
<feature type="binding site" evidence="1">
    <location>
        <position position="136"/>
    </location>
    <ligand>
        <name>substrate</name>
    </ligand>
</feature>
<proteinExistence type="inferred from homology"/>
<keyword id="KW-0028">Amino-acid biosynthesis</keyword>
<keyword id="KW-0057">Aromatic amino acid biosynthesis</keyword>
<keyword id="KW-0067">ATP-binding</keyword>
<keyword id="KW-0963">Cytoplasm</keyword>
<keyword id="KW-0418">Kinase</keyword>
<keyword id="KW-0460">Magnesium</keyword>
<keyword id="KW-0479">Metal-binding</keyword>
<keyword id="KW-0547">Nucleotide-binding</keyword>
<keyword id="KW-0808">Transferase</keyword>